<protein>
    <recommendedName>
        <fullName>Failed axon connections homolog</fullName>
    </recommendedName>
</protein>
<feature type="chain" id="PRO_0000417443" description="Failed axon connections homolog">
    <location>
        <begin position="1"/>
        <end position="409"/>
    </location>
</feature>
<feature type="transmembrane region" description="Helical" evidence="2">
    <location>
        <begin position="68"/>
        <end position="88"/>
    </location>
</feature>
<feature type="region of interest" description="Disordered" evidence="3">
    <location>
        <begin position="372"/>
        <end position="393"/>
    </location>
</feature>
<proteinExistence type="evidence at transcript level"/>
<evidence type="ECO:0000250" key="1"/>
<evidence type="ECO:0000255" key="2"/>
<evidence type="ECO:0000256" key="3">
    <source>
        <dbReference type="SAM" id="MobiDB-lite"/>
    </source>
</evidence>
<evidence type="ECO:0000305" key="4"/>
<keyword id="KW-0472">Membrane</keyword>
<keyword id="KW-1185">Reference proteome</keyword>
<keyword id="KW-0812">Transmembrane</keyword>
<keyword id="KW-1133">Transmembrane helix</keyword>
<dbReference type="EMBL" id="AK144924">
    <property type="protein sequence ID" value="BAE26139.1"/>
    <property type="molecule type" value="mRNA"/>
</dbReference>
<dbReference type="EMBL" id="AL772187">
    <property type="status" value="NOT_ANNOTATED_CDS"/>
    <property type="molecule type" value="Genomic_DNA"/>
</dbReference>
<dbReference type="EMBL" id="AL772278">
    <property type="status" value="NOT_ANNOTATED_CDS"/>
    <property type="molecule type" value="Genomic_DNA"/>
</dbReference>
<dbReference type="EMBL" id="CH466538">
    <property type="protein sequence ID" value="EDL05547.1"/>
    <property type="molecule type" value="Genomic_DNA"/>
</dbReference>
<dbReference type="CCDS" id="CCDS51130.1"/>
<dbReference type="RefSeq" id="NP_780443.2">
    <property type="nucleotide sequence ID" value="NM_175234.4"/>
</dbReference>
<dbReference type="SMR" id="Q3UMF9"/>
<dbReference type="BioGRID" id="217982">
    <property type="interactions" value="1"/>
</dbReference>
<dbReference type="FunCoup" id="Q3UMF9">
    <property type="interactions" value="1016"/>
</dbReference>
<dbReference type="STRING" id="10090.ENSMUSP00000029908"/>
<dbReference type="GlyGen" id="Q3UMF9">
    <property type="glycosylation" value="1 site, 1 N-linked glycan (1 site)"/>
</dbReference>
<dbReference type="iPTMnet" id="Q3UMF9"/>
<dbReference type="PhosphoSitePlus" id="Q3UMF9"/>
<dbReference type="jPOST" id="Q3UMF9"/>
<dbReference type="PaxDb" id="10090-ENSMUSP00000029908"/>
<dbReference type="ProteomicsDB" id="267573"/>
<dbReference type="Antibodypedia" id="48407">
    <property type="antibodies" value="48 antibodies from 10 providers"/>
</dbReference>
<dbReference type="DNASU" id="76132"/>
<dbReference type="Ensembl" id="ENSMUST00000029908.8">
    <property type="protein sequence ID" value="ENSMUSP00000029908.8"/>
    <property type="gene ID" value="ENSMUSG00000028246.14"/>
</dbReference>
<dbReference type="GeneID" id="76132"/>
<dbReference type="KEGG" id="mmu:76132"/>
<dbReference type="UCSC" id="uc008sdl.2">
    <property type="organism name" value="mouse"/>
</dbReference>
<dbReference type="AGR" id="MGI:1923382"/>
<dbReference type="CTD" id="84553"/>
<dbReference type="MGI" id="MGI:1923382">
    <property type="gene designation" value="Faxc"/>
</dbReference>
<dbReference type="VEuPathDB" id="HostDB:ENSMUSG00000028246"/>
<dbReference type="eggNOG" id="KOG4244">
    <property type="taxonomic scope" value="Eukaryota"/>
</dbReference>
<dbReference type="GeneTree" id="ENSGT00950000182919"/>
<dbReference type="HOGENOM" id="CLU_044137_2_0_1"/>
<dbReference type="InParanoid" id="Q3UMF9"/>
<dbReference type="OMA" id="HLYTIAY"/>
<dbReference type="OrthoDB" id="5809458at2759"/>
<dbReference type="PhylomeDB" id="Q3UMF9"/>
<dbReference type="TreeFam" id="TF314915"/>
<dbReference type="BioGRID-ORCS" id="76132">
    <property type="hits" value="2 hits in 82 CRISPR screens"/>
</dbReference>
<dbReference type="ChiTaRS" id="Faxc">
    <property type="organism name" value="mouse"/>
</dbReference>
<dbReference type="PRO" id="PR:Q3UMF9"/>
<dbReference type="Proteomes" id="UP000000589">
    <property type="component" value="Chromosome 4"/>
</dbReference>
<dbReference type="RNAct" id="Q3UMF9">
    <property type="molecule type" value="protein"/>
</dbReference>
<dbReference type="Bgee" id="ENSMUSG00000028246">
    <property type="expression patterns" value="Expressed in ear vesicle and 176 other cell types or tissues"/>
</dbReference>
<dbReference type="GO" id="GO:0016020">
    <property type="term" value="C:membrane"/>
    <property type="evidence" value="ECO:0007669"/>
    <property type="project" value="UniProtKB-SubCell"/>
</dbReference>
<dbReference type="CDD" id="cd03193">
    <property type="entry name" value="GST_C_Metaxin"/>
    <property type="match status" value="1"/>
</dbReference>
<dbReference type="CDD" id="cd03080">
    <property type="entry name" value="GST_N_Metaxin_like"/>
    <property type="match status" value="1"/>
</dbReference>
<dbReference type="InterPro" id="IPR026928">
    <property type="entry name" value="FAX/IsoI-like"/>
</dbReference>
<dbReference type="InterPro" id="IPR045796">
    <property type="entry name" value="FAXC_N"/>
</dbReference>
<dbReference type="InterPro" id="IPR036282">
    <property type="entry name" value="Glutathione-S-Trfase_C_sf"/>
</dbReference>
<dbReference type="InterPro" id="IPR040079">
    <property type="entry name" value="Glutathione_S-Trfase"/>
</dbReference>
<dbReference type="InterPro" id="IPR033468">
    <property type="entry name" value="Metaxin_GST"/>
</dbReference>
<dbReference type="InterPro" id="IPR050931">
    <property type="entry name" value="Mito_Protein_Transport_Metaxin"/>
</dbReference>
<dbReference type="InterPro" id="IPR012336">
    <property type="entry name" value="Thioredoxin-like_fold"/>
</dbReference>
<dbReference type="InterPro" id="IPR036249">
    <property type="entry name" value="Thioredoxin-like_sf"/>
</dbReference>
<dbReference type="PANTHER" id="PTHR12289:SF76">
    <property type="entry name" value="FAILED AXON CONNECTIONS HOMOLOG"/>
    <property type="match status" value="1"/>
</dbReference>
<dbReference type="PANTHER" id="PTHR12289">
    <property type="entry name" value="METAXIN RELATED"/>
    <property type="match status" value="1"/>
</dbReference>
<dbReference type="Pfam" id="PF19333">
    <property type="entry name" value="FAXC_N"/>
    <property type="match status" value="1"/>
</dbReference>
<dbReference type="Pfam" id="PF17171">
    <property type="entry name" value="GST_C_6"/>
    <property type="match status" value="1"/>
</dbReference>
<dbReference type="Pfam" id="PF17172">
    <property type="entry name" value="GST_N_4"/>
    <property type="match status" value="1"/>
</dbReference>
<dbReference type="SFLD" id="SFLDS00019">
    <property type="entry name" value="Glutathione_Transferase_(cytos"/>
    <property type="match status" value="1"/>
</dbReference>
<dbReference type="SFLD" id="SFLDG01200">
    <property type="entry name" value="SUF1.1"/>
    <property type="match status" value="1"/>
</dbReference>
<dbReference type="SUPFAM" id="SSF47616">
    <property type="entry name" value="GST C-terminal domain-like"/>
    <property type="match status" value="1"/>
</dbReference>
<dbReference type="SUPFAM" id="SSF52833">
    <property type="entry name" value="Thioredoxin-like"/>
    <property type="match status" value="1"/>
</dbReference>
<name>FAXC_MOUSE</name>
<sequence length="409" mass="46811">MHWGVGFASSRPCVVDLSWNQSISFFGWWAGSEEPFSFYGDIIAFPLQDYGGIMAGLGSDPWWKKTLYLTGGALLAAAAYLLHELLVIRKQQELDSKDAIILHQFARPNNGVPSLSPFCLKMETYLRMADLPYQNYFGGKLSAQGKMPWIEYNNEKVSGTEFIIDFLEEKLGVNLNKSLGPHERAVSRAVTKMVEEHFYWTLAYCQWVDNLNETRKMLSLSGGGPFSNLLRWVVCHITKGIVKREMHGHGIGRFSEEEIYMLMEKDMRSLAGLLGDKKYIMGPKLSTLDATVFGHLAQAMWTLPGTRPERLIKGELINLAMYCERIRRKFWPEWHHDDDNTIYESEESSEGSKTHTPMLDFSFYSRTETFEDEGAENSFSRTPDTDFTGHSLFDSDVEMDDYTDHEQCK</sequence>
<organism>
    <name type="scientific">Mus musculus</name>
    <name type="common">Mouse</name>
    <dbReference type="NCBI Taxonomy" id="10090"/>
    <lineage>
        <taxon>Eukaryota</taxon>
        <taxon>Metazoa</taxon>
        <taxon>Chordata</taxon>
        <taxon>Craniata</taxon>
        <taxon>Vertebrata</taxon>
        <taxon>Euteleostomi</taxon>
        <taxon>Mammalia</taxon>
        <taxon>Eutheria</taxon>
        <taxon>Euarchontoglires</taxon>
        <taxon>Glires</taxon>
        <taxon>Rodentia</taxon>
        <taxon>Myomorpha</taxon>
        <taxon>Muroidea</taxon>
        <taxon>Muridae</taxon>
        <taxon>Murinae</taxon>
        <taxon>Mus</taxon>
        <taxon>Mus</taxon>
    </lineage>
</organism>
<comment type="function">
    <text evidence="1">May play a role in axonal development.</text>
</comment>
<comment type="subcellular location">
    <subcellularLocation>
        <location evidence="4">Membrane</location>
        <topology evidence="4">Single-pass membrane protein</topology>
    </subcellularLocation>
</comment>
<comment type="similarity">
    <text evidence="4">Belongs to the FAX family.</text>
</comment>
<reference key="1">
    <citation type="journal article" date="2005" name="Science">
        <title>The transcriptional landscape of the mammalian genome.</title>
        <authorList>
            <person name="Carninci P."/>
            <person name="Kasukawa T."/>
            <person name="Katayama S."/>
            <person name="Gough J."/>
            <person name="Frith M.C."/>
            <person name="Maeda N."/>
            <person name="Oyama R."/>
            <person name="Ravasi T."/>
            <person name="Lenhard B."/>
            <person name="Wells C."/>
            <person name="Kodzius R."/>
            <person name="Shimokawa K."/>
            <person name="Bajic V.B."/>
            <person name="Brenner S.E."/>
            <person name="Batalov S."/>
            <person name="Forrest A.R."/>
            <person name="Zavolan M."/>
            <person name="Davis M.J."/>
            <person name="Wilming L.G."/>
            <person name="Aidinis V."/>
            <person name="Allen J.E."/>
            <person name="Ambesi-Impiombato A."/>
            <person name="Apweiler R."/>
            <person name="Aturaliya R.N."/>
            <person name="Bailey T.L."/>
            <person name="Bansal M."/>
            <person name="Baxter L."/>
            <person name="Beisel K.W."/>
            <person name="Bersano T."/>
            <person name="Bono H."/>
            <person name="Chalk A.M."/>
            <person name="Chiu K.P."/>
            <person name="Choudhary V."/>
            <person name="Christoffels A."/>
            <person name="Clutterbuck D.R."/>
            <person name="Crowe M.L."/>
            <person name="Dalla E."/>
            <person name="Dalrymple B.P."/>
            <person name="de Bono B."/>
            <person name="Della Gatta G."/>
            <person name="di Bernardo D."/>
            <person name="Down T."/>
            <person name="Engstrom P."/>
            <person name="Fagiolini M."/>
            <person name="Faulkner G."/>
            <person name="Fletcher C.F."/>
            <person name="Fukushima T."/>
            <person name="Furuno M."/>
            <person name="Futaki S."/>
            <person name="Gariboldi M."/>
            <person name="Georgii-Hemming P."/>
            <person name="Gingeras T.R."/>
            <person name="Gojobori T."/>
            <person name="Green R.E."/>
            <person name="Gustincich S."/>
            <person name="Harbers M."/>
            <person name="Hayashi Y."/>
            <person name="Hensch T.K."/>
            <person name="Hirokawa N."/>
            <person name="Hill D."/>
            <person name="Huminiecki L."/>
            <person name="Iacono M."/>
            <person name="Ikeo K."/>
            <person name="Iwama A."/>
            <person name="Ishikawa T."/>
            <person name="Jakt M."/>
            <person name="Kanapin A."/>
            <person name="Katoh M."/>
            <person name="Kawasawa Y."/>
            <person name="Kelso J."/>
            <person name="Kitamura H."/>
            <person name="Kitano H."/>
            <person name="Kollias G."/>
            <person name="Krishnan S.P."/>
            <person name="Kruger A."/>
            <person name="Kummerfeld S.K."/>
            <person name="Kurochkin I.V."/>
            <person name="Lareau L.F."/>
            <person name="Lazarevic D."/>
            <person name="Lipovich L."/>
            <person name="Liu J."/>
            <person name="Liuni S."/>
            <person name="McWilliam S."/>
            <person name="Madan Babu M."/>
            <person name="Madera M."/>
            <person name="Marchionni L."/>
            <person name="Matsuda H."/>
            <person name="Matsuzawa S."/>
            <person name="Miki H."/>
            <person name="Mignone F."/>
            <person name="Miyake S."/>
            <person name="Morris K."/>
            <person name="Mottagui-Tabar S."/>
            <person name="Mulder N."/>
            <person name="Nakano N."/>
            <person name="Nakauchi H."/>
            <person name="Ng P."/>
            <person name="Nilsson R."/>
            <person name="Nishiguchi S."/>
            <person name="Nishikawa S."/>
            <person name="Nori F."/>
            <person name="Ohara O."/>
            <person name="Okazaki Y."/>
            <person name="Orlando V."/>
            <person name="Pang K.C."/>
            <person name="Pavan W.J."/>
            <person name="Pavesi G."/>
            <person name="Pesole G."/>
            <person name="Petrovsky N."/>
            <person name="Piazza S."/>
            <person name="Reed J."/>
            <person name="Reid J.F."/>
            <person name="Ring B.Z."/>
            <person name="Ringwald M."/>
            <person name="Rost B."/>
            <person name="Ruan Y."/>
            <person name="Salzberg S.L."/>
            <person name="Sandelin A."/>
            <person name="Schneider C."/>
            <person name="Schoenbach C."/>
            <person name="Sekiguchi K."/>
            <person name="Semple C.A."/>
            <person name="Seno S."/>
            <person name="Sessa L."/>
            <person name="Sheng Y."/>
            <person name="Shibata Y."/>
            <person name="Shimada H."/>
            <person name="Shimada K."/>
            <person name="Silva D."/>
            <person name="Sinclair B."/>
            <person name="Sperling S."/>
            <person name="Stupka E."/>
            <person name="Sugiura K."/>
            <person name="Sultana R."/>
            <person name="Takenaka Y."/>
            <person name="Taki K."/>
            <person name="Tammoja K."/>
            <person name="Tan S.L."/>
            <person name="Tang S."/>
            <person name="Taylor M.S."/>
            <person name="Tegner J."/>
            <person name="Teichmann S.A."/>
            <person name="Ueda H.R."/>
            <person name="van Nimwegen E."/>
            <person name="Verardo R."/>
            <person name="Wei C.L."/>
            <person name="Yagi K."/>
            <person name="Yamanishi H."/>
            <person name="Zabarovsky E."/>
            <person name="Zhu S."/>
            <person name="Zimmer A."/>
            <person name="Hide W."/>
            <person name="Bult C."/>
            <person name="Grimmond S.M."/>
            <person name="Teasdale R.D."/>
            <person name="Liu E.T."/>
            <person name="Brusic V."/>
            <person name="Quackenbush J."/>
            <person name="Wahlestedt C."/>
            <person name="Mattick J.S."/>
            <person name="Hume D.A."/>
            <person name="Kai C."/>
            <person name="Sasaki D."/>
            <person name="Tomaru Y."/>
            <person name="Fukuda S."/>
            <person name="Kanamori-Katayama M."/>
            <person name="Suzuki M."/>
            <person name="Aoki J."/>
            <person name="Arakawa T."/>
            <person name="Iida J."/>
            <person name="Imamura K."/>
            <person name="Itoh M."/>
            <person name="Kato T."/>
            <person name="Kawaji H."/>
            <person name="Kawagashira N."/>
            <person name="Kawashima T."/>
            <person name="Kojima M."/>
            <person name="Kondo S."/>
            <person name="Konno H."/>
            <person name="Nakano K."/>
            <person name="Ninomiya N."/>
            <person name="Nishio T."/>
            <person name="Okada M."/>
            <person name="Plessy C."/>
            <person name="Shibata K."/>
            <person name="Shiraki T."/>
            <person name="Suzuki S."/>
            <person name="Tagami M."/>
            <person name="Waki K."/>
            <person name="Watahiki A."/>
            <person name="Okamura-Oho Y."/>
            <person name="Suzuki H."/>
            <person name="Kawai J."/>
            <person name="Hayashizaki Y."/>
        </authorList>
    </citation>
    <scope>NUCLEOTIDE SEQUENCE [LARGE SCALE MRNA]</scope>
    <source>
        <tissue>Mammary gland</tissue>
    </source>
</reference>
<reference key="2">
    <citation type="journal article" date="2009" name="PLoS Biol.">
        <title>Lineage-specific biology revealed by a finished genome assembly of the mouse.</title>
        <authorList>
            <person name="Church D.M."/>
            <person name="Goodstadt L."/>
            <person name="Hillier L.W."/>
            <person name="Zody M.C."/>
            <person name="Goldstein S."/>
            <person name="She X."/>
            <person name="Bult C.J."/>
            <person name="Agarwala R."/>
            <person name="Cherry J.L."/>
            <person name="DiCuccio M."/>
            <person name="Hlavina W."/>
            <person name="Kapustin Y."/>
            <person name="Meric P."/>
            <person name="Maglott D."/>
            <person name="Birtle Z."/>
            <person name="Marques A.C."/>
            <person name="Graves T."/>
            <person name="Zhou S."/>
            <person name="Teague B."/>
            <person name="Potamousis K."/>
            <person name="Churas C."/>
            <person name="Place M."/>
            <person name="Herschleb J."/>
            <person name="Runnheim R."/>
            <person name="Forrest D."/>
            <person name="Amos-Landgraf J."/>
            <person name="Schwartz D.C."/>
            <person name="Cheng Z."/>
            <person name="Lindblad-Toh K."/>
            <person name="Eichler E.E."/>
            <person name="Ponting C.P."/>
        </authorList>
    </citation>
    <scope>NUCLEOTIDE SEQUENCE [LARGE SCALE GENOMIC DNA]</scope>
    <source>
        <strain>C57BL/6J</strain>
    </source>
</reference>
<reference key="3">
    <citation type="submission" date="2005-09" db="EMBL/GenBank/DDBJ databases">
        <authorList>
            <person name="Mural R.J."/>
            <person name="Adams M.D."/>
            <person name="Myers E.W."/>
            <person name="Smith H.O."/>
            <person name="Venter J.C."/>
        </authorList>
    </citation>
    <scope>NUCLEOTIDE SEQUENCE [LARGE SCALE GENOMIC DNA]</scope>
</reference>
<gene>
    <name type="primary">Faxc</name>
</gene>
<accession>Q3UMF9</accession>